<organism>
    <name type="scientific">Legionella pneumophila (strain Lens)</name>
    <dbReference type="NCBI Taxonomy" id="297245"/>
    <lineage>
        <taxon>Bacteria</taxon>
        <taxon>Pseudomonadati</taxon>
        <taxon>Pseudomonadota</taxon>
        <taxon>Gammaproteobacteria</taxon>
        <taxon>Legionellales</taxon>
        <taxon>Legionellaceae</taxon>
        <taxon>Legionella</taxon>
    </lineage>
</organism>
<evidence type="ECO:0000255" key="1">
    <source>
        <dbReference type="HAMAP-Rule" id="MF_00318"/>
    </source>
</evidence>
<protein>
    <recommendedName>
        <fullName evidence="1">Enolase</fullName>
        <ecNumber evidence="1">4.2.1.11</ecNumber>
    </recommendedName>
    <alternativeName>
        <fullName evidence="1">2-phospho-D-glycerate hydro-lyase</fullName>
    </alternativeName>
    <alternativeName>
        <fullName evidence="1">2-phosphoglycerate dehydratase</fullName>
    </alternativeName>
</protein>
<name>ENO_LEGPL</name>
<gene>
    <name evidence="1" type="primary">eno</name>
    <name type="ordered locus">lpl2015</name>
</gene>
<keyword id="KW-0963">Cytoplasm</keyword>
<keyword id="KW-0324">Glycolysis</keyword>
<keyword id="KW-0456">Lyase</keyword>
<keyword id="KW-0460">Magnesium</keyword>
<keyword id="KW-0479">Metal-binding</keyword>
<keyword id="KW-0964">Secreted</keyword>
<feature type="chain" id="PRO_0000133910" description="Enolase">
    <location>
        <begin position="1"/>
        <end position="422"/>
    </location>
</feature>
<feature type="active site" description="Proton donor" evidence="1">
    <location>
        <position position="204"/>
    </location>
</feature>
<feature type="active site" description="Proton acceptor" evidence="1">
    <location>
        <position position="336"/>
    </location>
</feature>
<feature type="binding site" evidence="1">
    <location>
        <position position="162"/>
    </location>
    <ligand>
        <name>(2R)-2-phosphoglycerate</name>
        <dbReference type="ChEBI" id="CHEBI:58289"/>
    </ligand>
</feature>
<feature type="binding site" evidence="1">
    <location>
        <position position="241"/>
    </location>
    <ligand>
        <name>Mg(2+)</name>
        <dbReference type="ChEBI" id="CHEBI:18420"/>
    </ligand>
</feature>
<feature type="binding site" evidence="1">
    <location>
        <position position="284"/>
    </location>
    <ligand>
        <name>Mg(2+)</name>
        <dbReference type="ChEBI" id="CHEBI:18420"/>
    </ligand>
</feature>
<feature type="binding site" evidence="1">
    <location>
        <position position="311"/>
    </location>
    <ligand>
        <name>Mg(2+)</name>
        <dbReference type="ChEBI" id="CHEBI:18420"/>
    </ligand>
</feature>
<feature type="binding site" evidence="1">
    <location>
        <position position="336"/>
    </location>
    <ligand>
        <name>(2R)-2-phosphoglycerate</name>
        <dbReference type="ChEBI" id="CHEBI:58289"/>
    </ligand>
</feature>
<feature type="binding site" evidence="1">
    <location>
        <position position="365"/>
    </location>
    <ligand>
        <name>(2R)-2-phosphoglycerate</name>
        <dbReference type="ChEBI" id="CHEBI:58289"/>
    </ligand>
</feature>
<feature type="binding site" evidence="1">
    <location>
        <position position="366"/>
    </location>
    <ligand>
        <name>(2R)-2-phosphoglycerate</name>
        <dbReference type="ChEBI" id="CHEBI:58289"/>
    </ligand>
</feature>
<feature type="binding site" evidence="1">
    <location>
        <position position="387"/>
    </location>
    <ligand>
        <name>(2R)-2-phosphoglycerate</name>
        <dbReference type="ChEBI" id="CHEBI:58289"/>
    </ligand>
</feature>
<reference key="1">
    <citation type="journal article" date="2004" name="Nat. Genet.">
        <title>Evidence in the Legionella pneumophila genome for exploitation of host cell functions and high genome plasticity.</title>
        <authorList>
            <person name="Cazalet C."/>
            <person name="Rusniok C."/>
            <person name="Brueggemann H."/>
            <person name="Zidane N."/>
            <person name="Magnier A."/>
            <person name="Ma L."/>
            <person name="Tichit M."/>
            <person name="Jarraud S."/>
            <person name="Bouchier C."/>
            <person name="Vandenesch F."/>
            <person name="Kunst F."/>
            <person name="Etienne J."/>
            <person name="Glaser P."/>
            <person name="Buchrieser C."/>
        </authorList>
    </citation>
    <scope>NUCLEOTIDE SEQUENCE [LARGE SCALE GENOMIC DNA]</scope>
    <source>
        <strain>Lens</strain>
    </source>
</reference>
<dbReference type="EC" id="4.2.1.11" evidence="1"/>
<dbReference type="EMBL" id="CR628337">
    <property type="protein sequence ID" value="CAH16255.1"/>
    <property type="molecule type" value="Genomic_DNA"/>
</dbReference>
<dbReference type="SMR" id="Q5WV02"/>
<dbReference type="KEGG" id="lpf:lpl2015"/>
<dbReference type="LegioList" id="lpl2015"/>
<dbReference type="HOGENOM" id="CLU_031223_2_1_6"/>
<dbReference type="UniPathway" id="UPA00109">
    <property type="reaction ID" value="UER00187"/>
</dbReference>
<dbReference type="Proteomes" id="UP000002517">
    <property type="component" value="Chromosome"/>
</dbReference>
<dbReference type="GO" id="GO:0009986">
    <property type="term" value="C:cell surface"/>
    <property type="evidence" value="ECO:0007669"/>
    <property type="project" value="UniProtKB-SubCell"/>
</dbReference>
<dbReference type="GO" id="GO:0005576">
    <property type="term" value="C:extracellular region"/>
    <property type="evidence" value="ECO:0007669"/>
    <property type="project" value="UniProtKB-SubCell"/>
</dbReference>
<dbReference type="GO" id="GO:0000015">
    <property type="term" value="C:phosphopyruvate hydratase complex"/>
    <property type="evidence" value="ECO:0007669"/>
    <property type="project" value="InterPro"/>
</dbReference>
<dbReference type="GO" id="GO:0000287">
    <property type="term" value="F:magnesium ion binding"/>
    <property type="evidence" value="ECO:0007669"/>
    <property type="project" value="UniProtKB-UniRule"/>
</dbReference>
<dbReference type="GO" id="GO:0004634">
    <property type="term" value="F:phosphopyruvate hydratase activity"/>
    <property type="evidence" value="ECO:0007669"/>
    <property type="project" value="UniProtKB-UniRule"/>
</dbReference>
<dbReference type="GO" id="GO:0006096">
    <property type="term" value="P:glycolytic process"/>
    <property type="evidence" value="ECO:0007669"/>
    <property type="project" value="UniProtKB-UniRule"/>
</dbReference>
<dbReference type="CDD" id="cd03313">
    <property type="entry name" value="enolase"/>
    <property type="match status" value="1"/>
</dbReference>
<dbReference type="FunFam" id="3.30.390.10:FF:000001">
    <property type="entry name" value="Enolase"/>
    <property type="match status" value="1"/>
</dbReference>
<dbReference type="Gene3D" id="3.20.20.120">
    <property type="entry name" value="Enolase-like C-terminal domain"/>
    <property type="match status" value="1"/>
</dbReference>
<dbReference type="Gene3D" id="3.30.390.10">
    <property type="entry name" value="Enolase-like, N-terminal domain"/>
    <property type="match status" value="1"/>
</dbReference>
<dbReference type="HAMAP" id="MF_00318">
    <property type="entry name" value="Enolase"/>
    <property type="match status" value="1"/>
</dbReference>
<dbReference type="InterPro" id="IPR000941">
    <property type="entry name" value="Enolase"/>
</dbReference>
<dbReference type="InterPro" id="IPR036849">
    <property type="entry name" value="Enolase-like_C_sf"/>
</dbReference>
<dbReference type="InterPro" id="IPR029017">
    <property type="entry name" value="Enolase-like_N"/>
</dbReference>
<dbReference type="InterPro" id="IPR020810">
    <property type="entry name" value="Enolase_C"/>
</dbReference>
<dbReference type="InterPro" id="IPR020809">
    <property type="entry name" value="Enolase_CS"/>
</dbReference>
<dbReference type="InterPro" id="IPR020811">
    <property type="entry name" value="Enolase_N"/>
</dbReference>
<dbReference type="NCBIfam" id="TIGR01060">
    <property type="entry name" value="eno"/>
    <property type="match status" value="1"/>
</dbReference>
<dbReference type="PANTHER" id="PTHR11902">
    <property type="entry name" value="ENOLASE"/>
    <property type="match status" value="1"/>
</dbReference>
<dbReference type="PANTHER" id="PTHR11902:SF1">
    <property type="entry name" value="ENOLASE"/>
    <property type="match status" value="1"/>
</dbReference>
<dbReference type="Pfam" id="PF00113">
    <property type="entry name" value="Enolase_C"/>
    <property type="match status" value="1"/>
</dbReference>
<dbReference type="Pfam" id="PF03952">
    <property type="entry name" value="Enolase_N"/>
    <property type="match status" value="1"/>
</dbReference>
<dbReference type="PIRSF" id="PIRSF001400">
    <property type="entry name" value="Enolase"/>
    <property type="match status" value="1"/>
</dbReference>
<dbReference type="PRINTS" id="PR00148">
    <property type="entry name" value="ENOLASE"/>
</dbReference>
<dbReference type="SFLD" id="SFLDF00002">
    <property type="entry name" value="enolase"/>
    <property type="match status" value="1"/>
</dbReference>
<dbReference type="SFLD" id="SFLDG00178">
    <property type="entry name" value="enolase"/>
    <property type="match status" value="1"/>
</dbReference>
<dbReference type="SMART" id="SM01192">
    <property type="entry name" value="Enolase_C"/>
    <property type="match status" value="1"/>
</dbReference>
<dbReference type="SMART" id="SM01193">
    <property type="entry name" value="Enolase_N"/>
    <property type="match status" value="1"/>
</dbReference>
<dbReference type="SUPFAM" id="SSF51604">
    <property type="entry name" value="Enolase C-terminal domain-like"/>
    <property type="match status" value="1"/>
</dbReference>
<dbReference type="SUPFAM" id="SSF54826">
    <property type="entry name" value="Enolase N-terminal domain-like"/>
    <property type="match status" value="1"/>
</dbReference>
<dbReference type="PROSITE" id="PS00164">
    <property type="entry name" value="ENOLASE"/>
    <property type="match status" value="1"/>
</dbReference>
<accession>Q5WV02</accession>
<comment type="function">
    <text evidence="1">Catalyzes the reversible conversion of 2-phosphoglycerate (2-PG) into phosphoenolpyruvate (PEP). It is essential for the degradation of carbohydrates via glycolysis.</text>
</comment>
<comment type="catalytic activity">
    <reaction evidence="1">
        <text>(2R)-2-phosphoglycerate = phosphoenolpyruvate + H2O</text>
        <dbReference type="Rhea" id="RHEA:10164"/>
        <dbReference type="ChEBI" id="CHEBI:15377"/>
        <dbReference type="ChEBI" id="CHEBI:58289"/>
        <dbReference type="ChEBI" id="CHEBI:58702"/>
        <dbReference type="EC" id="4.2.1.11"/>
    </reaction>
</comment>
<comment type="cofactor">
    <cofactor evidence="1">
        <name>Mg(2+)</name>
        <dbReference type="ChEBI" id="CHEBI:18420"/>
    </cofactor>
    <text evidence="1">Binds a second Mg(2+) ion via substrate during catalysis.</text>
</comment>
<comment type="pathway">
    <text evidence="1">Carbohydrate degradation; glycolysis; pyruvate from D-glyceraldehyde 3-phosphate: step 4/5.</text>
</comment>
<comment type="subunit">
    <text evidence="1">Component of the RNA degradosome, a multiprotein complex involved in RNA processing and mRNA degradation.</text>
</comment>
<comment type="subcellular location">
    <subcellularLocation>
        <location evidence="1">Cytoplasm</location>
    </subcellularLocation>
    <subcellularLocation>
        <location evidence="1">Secreted</location>
    </subcellularLocation>
    <subcellularLocation>
        <location evidence="1">Cell surface</location>
    </subcellularLocation>
    <text evidence="1">Fractions of enolase are present in both the cytoplasm and on the cell surface.</text>
</comment>
<comment type="similarity">
    <text evidence="1">Belongs to the enolase family.</text>
</comment>
<sequence length="422" mass="46087">MHIHKIQAREILDSRGNPTIEADVILENGIIGRASVPSGASTGSREACELRDNDPKRYAGKGVQKAVKHVNEEINQALQGLSVSDQENLDRILCQLDNTENKSHLGANAILATSLACARARALSLNQPLYMTLNQGDMMTMPVPMMNILNGGAHADNNVDIQEFMIMPIGAPDFPVALQMGTEIFHVLKSVLKKQGLNTAVGDEGGFAPNIQSNRQALDLLSEAIEKAGFRLGEDIVFALDVAASELFNEGFYHMSSENQKFDSHQLIEYYANLISSYPIASIEDGLDEKDWSGWKQLTTLLGNKVQLVGDDLFVTNPKILQEGIAQGIANAILIKVNQIGTLSETRQAIKLAYDNGYRCVMSHRSGETEDTFIADLAVASGCGQIKTGSLCRTDRTAKYNQLLRINELASLPYAGKNILKR</sequence>
<proteinExistence type="inferred from homology"/>